<name>PS1C2_HUMAN</name>
<dbReference type="EMBL" id="AB031480">
    <property type="protein sequence ID" value="BAA88131.1"/>
    <property type="molecule type" value="mRNA"/>
</dbReference>
<dbReference type="EMBL" id="AF484420">
    <property type="protein sequence ID" value="AAO49377.1"/>
    <property type="molecule type" value="mRNA"/>
</dbReference>
<dbReference type="EMBL" id="BA000025">
    <property type="protein sequence ID" value="BAB63315.1"/>
    <property type="molecule type" value="Genomic_DNA"/>
</dbReference>
<dbReference type="EMBL" id="AB088114">
    <property type="protein sequence ID" value="BAC54949.1"/>
    <property type="molecule type" value="Genomic_DNA"/>
</dbReference>
<dbReference type="EMBL" id="AL662844">
    <property type="status" value="NOT_ANNOTATED_CDS"/>
    <property type="molecule type" value="Genomic_DNA"/>
</dbReference>
<dbReference type="CCDS" id="CCDS4694.1"/>
<dbReference type="RefSeq" id="NP_054788.2">
    <property type="nucleotide sequence ID" value="NM_014069.3"/>
</dbReference>
<dbReference type="BioGRID" id="128076">
    <property type="interactions" value="31"/>
</dbReference>
<dbReference type="IntAct" id="Q9UIG4">
    <property type="interactions" value="27"/>
</dbReference>
<dbReference type="STRING" id="9606.ENSP00000259845"/>
<dbReference type="iPTMnet" id="Q9UIG4"/>
<dbReference type="PhosphoSitePlus" id="Q9UIG4"/>
<dbReference type="BioMuta" id="PSORS1C2"/>
<dbReference type="MassIVE" id="Q9UIG4"/>
<dbReference type="PaxDb" id="9606-ENSP00000259845"/>
<dbReference type="PeptideAtlas" id="Q9UIG4"/>
<dbReference type="Antibodypedia" id="53231">
    <property type="antibodies" value="13 antibodies from 6 providers"/>
</dbReference>
<dbReference type="DNASU" id="170680"/>
<dbReference type="Ensembl" id="ENST00000259845.5">
    <property type="protein sequence ID" value="ENSP00000259845.4"/>
    <property type="gene ID" value="ENSG00000204538.4"/>
</dbReference>
<dbReference type="Ensembl" id="ENST00000383530.2">
    <property type="protein sequence ID" value="ENSP00000373022.2"/>
    <property type="gene ID" value="ENSG00000206459.2"/>
</dbReference>
<dbReference type="Ensembl" id="ENST00000413924.2">
    <property type="protein sequence ID" value="ENSP00000398734.2"/>
    <property type="gene ID" value="ENSG00000227246.2"/>
</dbReference>
<dbReference type="Ensembl" id="ENST00000416027.2">
    <property type="protein sequence ID" value="ENSP00000390931.2"/>
    <property type="gene ID" value="ENSG00000232127.2"/>
</dbReference>
<dbReference type="Ensembl" id="ENST00000422316.2">
    <property type="protein sequence ID" value="ENSP00000403456.2"/>
    <property type="gene ID" value="ENSG00000234605.2"/>
</dbReference>
<dbReference type="Ensembl" id="ENST00000458589.2">
    <property type="protein sequence ID" value="ENSP00000414952.2"/>
    <property type="gene ID" value="ENSG00000224544.2"/>
</dbReference>
<dbReference type="GeneID" id="170680"/>
<dbReference type="KEGG" id="hsa:170680"/>
<dbReference type="MANE-Select" id="ENST00000259845.5">
    <property type="protein sequence ID" value="ENSP00000259845.4"/>
    <property type="RefSeq nucleotide sequence ID" value="NM_014069.3"/>
    <property type="RefSeq protein sequence ID" value="NP_054788.2"/>
</dbReference>
<dbReference type="UCSC" id="uc003nso.5">
    <property type="organism name" value="human"/>
</dbReference>
<dbReference type="AGR" id="HGNC:17199"/>
<dbReference type="CTD" id="170680"/>
<dbReference type="DisGeNET" id="170680"/>
<dbReference type="GeneCards" id="PSORS1C2"/>
<dbReference type="HGNC" id="HGNC:17199">
    <property type="gene designation" value="PSORS1C2"/>
</dbReference>
<dbReference type="HPA" id="ENSG00000204538">
    <property type="expression patterns" value="Tissue enriched (skin)"/>
</dbReference>
<dbReference type="MIM" id="613526">
    <property type="type" value="gene"/>
</dbReference>
<dbReference type="neXtProt" id="NX_Q9UIG4"/>
<dbReference type="OpenTargets" id="ENSG00000204538"/>
<dbReference type="PharmGKB" id="PA33920"/>
<dbReference type="VEuPathDB" id="HostDB:ENSG00000204538"/>
<dbReference type="eggNOG" id="ENOG502QQEE">
    <property type="taxonomic scope" value="Eukaryota"/>
</dbReference>
<dbReference type="GeneTree" id="ENSGT00390000013322"/>
<dbReference type="HOGENOM" id="CLU_1880263_0_0_1"/>
<dbReference type="InParanoid" id="Q9UIG4"/>
<dbReference type="OMA" id="LPDDPWP"/>
<dbReference type="OrthoDB" id="9838366at2759"/>
<dbReference type="PAN-GO" id="Q9UIG4">
    <property type="GO annotations" value="0 GO annotations based on evolutionary models"/>
</dbReference>
<dbReference type="PhylomeDB" id="Q9UIG4"/>
<dbReference type="TreeFam" id="TF337801"/>
<dbReference type="PathwayCommons" id="Q9UIG4"/>
<dbReference type="SignaLink" id="Q9UIG4"/>
<dbReference type="BioGRID-ORCS" id="170680">
    <property type="hits" value="12 hits in 1141 CRISPR screens"/>
</dbReference>
<dbReference type="GenomeRNAi" id="170680"/>
<dbReference type="Pharos" id="Q9UIG4">
    <property type="development level" value="Tbio"/>
</dbReference>
<dbReference type="PRO" id="PR:Q9UIG4"/>
<dbReference type="Proteomes" id="UP000005640">
    <property type="component" value="Chromosome 6"/>
</dbReference>
<dbReference type="RNAct" id="Q9UIG4">
    <property type="molecule type" value="protein"/>
</dbReference>
<dbReference type="Bgee" id="ENSG00000204538">
    <property type="expression patterns" value="Expressed in skin of leg and 77 other cell types or tissues"/>
</dbReference>
<dbReference type="ExpressionAtlas" id="Q9UIG4">
    <property type="expression patterns" value="baseline and differential"/>
</dbReference>
<dbReference type="GO" id="GO:0005576">
    <property type="term" value="C:extracellular region"/>
    <property type="evidence" value="ECO:0007669"/>
    <property type="project" value="UniProtKB-SubCell"/>
</dbReference>
<dbReference type="InterPro" id="IPR029271">
    <property type="entry name" value="SPR1"/>
</dbReference>
<dbReference type="PANTHER" id="PTHR31853">
    <property type="entry name" value="PSORIASIS SUSCEPTIBILITY 1 CANDIDATE GENE 2 PROTEIN"/>
    <property type="match status" value="1"/>
</dbReference>
<dbReference type="PANTHER" id="PTHR31853:SF1">
    <property type="entry name" value="PSORIASIS SUSCEPTIBILITY 1 CANDIDATE GENE 2 PROTEIN"/>
    <property type="match status" value="1"/>
</dbReference>
<dbReference type="Pfam" id="PF15356">
    <property type="entry name" value="SPR1"/>
    <property type="match status" value="1"/>
</dbReference>
<sequence length="136" mass="15101">MILNWKLLGILVLCLHTRGISGSEGHPSHPPAEDREEAGSPTLPQGPPVPGDPWPGAPPLFEDPPPTRPSRPWRDLPETGVWLPEPPRTDPPQPPRPDDPWPAGPQPPENPWPPAPEVDNRPQEEPDLDPPREEYR</sequence>
<accession>Q9UIG4</accession>
<accession>Q5STD0</accession>
<gene>
    <name type="primary">PSORS1C2</name>
    <name type="synonym">C6orf17</name>
    <name type="synonym">SPR1</name>
</gene>
<evidence type="ECO:0000255" key="1"/>
<evidence type="ECO:0000256" key="2">
    <source>
        <dbReference type="SAM" id="MobiDB-lite"/>
    </source>
</evidence>
<evidence type="ECO:0000269" key="3">
    <source>
    </source>
</evidence>
<evidence type="ECO:0000269" key="4">
    <source>
    </source>
</evidence>
<evidence type="ECO:0000269" key="5">
    <source>
    </source>
</evidence>
<evidence type="ECO:0000269" key="6">
    <source ref="3"/>
</evidence>
<evidence type="ECO:0000305" key="7"/>
<protein>
    <recommendedName>
        <fullName>Psoriasis susceptibility 1 candidate gene 2 protein</fullName>
    </recommendedName>
    <alternativeName>
        <fullName>Protein SPR1</fullName>
    </alternativeName>
</protein>
<keyword id="KW-1267">Proteomics identification</keyword>
<keyword id="KW-1185">Reference proteome</keyword>
<keyword id="KW-0964">Secreted</keyword>
<keyword id="KW-0732">Signal</keyword>
<organism>
    <name type="scientific">Homo sapiens</name>
    <name type="common">Human</name>
    <dbReference type="NCBI Taxonomy" id="9606"/>
    <lineage>
        <taxon>Eukaryota</taxon>
        <taxon>Metazoa</taxon>
        <taxon>Chordata</taxon>
        <taxon>Craniata</taxon>
        <taxon>Vertebrata</taxon>
        <taxon>Euteleostomi</taxon>
        <taxon>Mammalia</taxon>
        <taxon>Eutheria</taxon>
        <taxon>Euarchontoglires</taxon>
        <taxon>Primates</taxon>
        <taxon>Haplorrhini</taxon>
        <taxon>Catarrhini</taxon>
        <taxon>Hominidae</taxon>
        <taxon>Homo</taxon>
    </lineage>
</organism>
<proteinExistence type="evidence at protein level"/>
<reference key="1">
    <citation type="journal article" date="1999" name="Hum. Mol. Genet.">
        <title>Association analysis using refined microsatellite markers localizes a susceptibility locus for psoriasis vulgaris within a 111kb segment telomeric to the HLA-C gene.</title>
        <authorList>
            <person name="Oka A."/>
            <person name="Tamiya G."/>
            <person name="Tomizawa M."/>
            <person name="Ota M."/>
            <person name="Katsuyama Y."/>
            <person name="Makino S."/>
            <person name="Shiina T."/>
            <person name="Yoshitome M."/>
            <person name="Lizuka M."/>
            <person name="Sasao Y."/>
            <person name="Iwashita K."/>
            <person name="Kawakubo Y."/>
            <person name="Sugai J."/>
            <person name="Ozawa A."/>
            <person name="Ohkido M."/>
            <person name="Kimura M."/>
            <person name="Bahram S."/>
            <person name="Inoko H."/>
        </authorList>
    </citation>
    <scope>NUCLEOTIDE SEQUENCE [MRNA]</scope>
    <scope>VARIANT PRO-83</scope>
</reference>
<reference key="2">
    <citation type="journal article" date="2003" name="Exp. Dermatol.">
        <title>Polymorphisms in the SEEK1 and SPR1 genes on 6p21.3 associate with psoriasis in the Swedish population.</title>
        <authorList>
            <person name="Holm S.J."/>
            <person name="Carlen L.M."/>
            <person name="Mallbris L."/>
            <person name="Staehle-Baeckdahl M."/>
            <person name="O'Brien K.P."/>
        </authorList>
    </citation>
    <scope>NUCLEOTIDE SEQUENCE [MRNA]</scope>
    <scope>TISSUE SPECIFICITY</scope>
    <scope>VARIANTS ASP-25; PRO-83 AND LEU-84</scope>
    <source>
        <tissue>Skin</tissue>
    </source>
</reference>
<reference key="3">
    <citation type="submission" date="1999-09" db="EMBL/GenBank/DDBJ databases">
        <title>Homo sapiens 2,229,817bp genomic DNA of 6p21.3 HLA class I region.</title>
        <authorList>
            <person name="Shiina S."/>
            <person name="Tamiya G."/>
            <person name="Oka A."/>
            <person name="Inoko H."/>
        </authorList>
    </citation>
    <scope>NUCLEOTIDE SEQUENCE [LARGE SCALE GENOMIC DNA]</scope>
    <scope>VARIANT PRO-83</scope>
</reference>
<reference key="4">
    <citation type="journal article" date="2006" name="Genetics">
        <title>Rapid evolution of major histocompatibility complex class I genes in primates generates new disease alleles in humans via hitchhiking diversity.</title>
        <authorList>
            <person name="Shiina T."/>
            <person name="Ota M."/>
            <person name="Shimizu S."/>
            <person name="Katsuyama Y."/>
            <person name="Hashimoto N."/>
            <person name="Takasu M."/>
            <person name="Anzai T."/>
            <person name="Kulski J.K."/>
            <person name="Kikkawa E."/>
            <person name="Naruse T."/>
            <person name="Kimura N."/>
            <person name="Yanagiya K."/>
            <person name="Watanabe A."/>
            <person name="Hosomichi K."/>
            <person name="Kohara S."/>
            <person name="Iwamoto C."/>
            <person name="Umehara Y."/>
            <person name="Meyer A."/>
            <person name="Wanner V."/>
            <person name="Sano K."/>
            <person name="Macquin C."/>
            <person name="Ikeo K."/>
            <person name="Tokunaga K."/>
            <person name="Gojobori T."/>
            <person name="Inoko H."/>
            <person name="Bahram S."/>
        </authorList>
    </citation>
    <scope>NUCLEOTIDE SEQUENCE [LARGE SCALE GENOMIC DNA]</scope>
    <scope>VARIANT PRO-83</scope>
</reference>
<reference key="5">
    <citation type="journal article" date="2003" name="Nature">
        <title>The DNA sequence and analysis of human chromosome 6.</title>
        <authorList>
            <person name="Mungall A.J."/>
            <person name="Palmer S.A."/>
            <person name="Sims S.K."/>
            <person name="Edwards C.A."/>
            <person name="Ashurst J.L."/>
            <person name="Wilming L."/>
            <person name="Jones M.C."/>
            <person name="Horton R."/>
            <person name="Hunt S.E."/>
            <person name="Scott C.E."/>
            <person name="Gilbert J.G.R."/>
            <person name="Clamp M.E."/>
            <person name="Bethel G."/>
            <person name="Milne S."/>
            <person name="Ainscough R."/>
            <person name="Almeida J.P."/>
            <person name="Ambrose K.D."/>
            <person name="Andrews T.D."/>
            <person name="Ashwell R.I.S."/>
            <person name="Babbage A.K."/>
            <person name="Bagguley C.L."/>
            <person name="Bailey J."/>
            <person name="Banerjee R."/>
            <person name="Barker D.J."/>
            <person name="Barlow K.F."/>
            <person name="Bates K."/>
            <person name="Beare D.M."/>
            <person name="Beasley H."/>
            <person name="Beasley O."/>
            <person name="Bird C.P."/>
            <person name="Blakey S.E."/>
            <person name="Bray-Allen S."/>
            <person name="Brook J."/>
            <person name="Brown A.J."/>
            <person name="Brown J.Y."/>
            <person name="Burford D.C."/>
            <person name="Burrill W."/>
            <person name="Burton J."/>
            <person name="Carder C."/>
            <person name="Carter N.P."/>
            <person name="Chapman J.C."/>
            <person name="Clark S.Y."/>
            <person name="Clark G."/>
            <person name="Clee C.M."/>
            <person name="Clegg S."/>
            <person name="Cobley V."/>
            <person name="Collier R.E."/>
            <person name="Collins J.E."/>
            <person name="Colman L.K."/>
            <person name="Corby N.R."/>
            <person name="Coville G.J."/>
            <person name="Culley K.M."/>
            <person name="Dhami P."/>
            <person name="Davies J."/>
            <person name="Dunn M."/>
            <person name="Earthrowl M.E."/>
            <person name="Ellington A.E."/>
            <person name="Evans K.A."/>
            <person name="Faulkner L."/>
            <person name="Francis M.D."/>
            <person name="Frankish A."/>
            <person name="Frankland J."/>
            <person name="French L."/>
            <person name="Garner P."/>
            <person name="Garnett J."/>
            <person name="Ghori M.J."/>
            <person name="Gilby L.M."/>
            <person name="Gillson C.J."/>
            <person name="Glithero R.J."/>
            <person name="Grafham D.V."/>
            <person name="Grant M."/>
            <person name="Gribble S."/>
            <person name="Griffiths C."/>
            <person name="Griffiths M.N.D."/>
            <person name="Hall R."/>
            <person name="Halls K.S."/>
            <person name="Hammond S."/>
            <person name="Harley J.L."/>
            <person name="Hart E.A."/>
            <person name="Heath P.D."/>
            <person name="Heathcott R."/>
            <person name="Holmes S.J."/>
            <person name="Howden P.J."/>
            <person name="Howe K.L."/>
            <person name="Howell G.R."/>
            <person name="Huckle E."/>
            <person name="Humphray S.J."/>
            <person name="Humphries M.D."/>
            <person name="Hunt A.R."/>
            <person name="Johnson C.M."/>
            <person name="Joy A.A."/>
            <person name="Kay M."/>
            <person name="Keenan S.J."/>
            <person name="Kimberley A.M."/>
            <person name="King A."/>
            <person name="Laird G.K."/>
            <person name="Langford C."/>
            <person name="Lawlor S."/>
            <person name="Leongamornlert D.A."/>
            <person name="Leversha M."/>
            <person name="Lloyd C.R."/>
            <person name="Lloyd D.M."/>
            <person name="Loveland J.E."/>
            <person name="Lovell J."/>
            <person name="Martin S."/>
            <person name="Mashreghi-Mohammadi M."/>
            <person name="Maslen G.L."/>
            <person name="Matthews L."/>
            <person name="McCann O.T."/>
            <person name="McLaren S.J."/>
            <person name="McLay K."/>
            <person name="McMurray A."/>
            <person name="Moore M.J.F."/>
            <person name="Mullikin J.C."/>
            <person name="Niblett D."/>
            <person name="Nickerson T."/>
            <person name="Novik K.L."/>
            <person name="Oliver K."/>
            <person name="Overton-Larty E.K."/>
            <person name="Parker A."/>
            <person name="Patel R."/>
            <person name="Pearce A.V."/>
            <person name="Peck A.I."/>
            <person name="Phillimore B.J.C.T."/>
            <person name="Phillips S."/>
            <person name="Plumb R.W."/>
            <person name="Porter K.M."/>
            <person name="Ramsey Y."/>
            <person name="Ranby S.A."/>
            <person name="Rice C.M."/>
            <person name="Ross M.T."/>
            <person name="Searle S.M."/>
            <person name="Sehra H.K."/>
            <person name="Sheridan E."/>
            <person name="Skuce C.D."/>
            <person name="Smith S."/>
            <person name="Smith M."/>
            <person name="Spraggon L."/>
            <person name="Squares S.L."/>
            <person name="Steward C.A."/>
            <person name="Sycamore N."/>
            <person name="Tamlyn-Hall G."/>
            <person name="Tester J."/>
            <person name="Theaker A.J."/>
            <person name="Thomas D.W."/>
            <person name="Thorpe A."/>
            <person name="Tracey A."/>
            <person name="Tromans A."/>
            <person name="Tubby B."/>
            <person name="Wall M."/>
            <person name="Wallis J.M."/>
            <person name="West A.P."/>
            <person name="White S.S."/>
            <person name="Whitehead S.L."/>
            <person name="Whittaker H."/>
            <person name="Wild A."/>
            <person name="Willey D.J."/>
            <person name="Wilmer T.E."/>
            <person name="Wood J.M."/>
            <person name="Wray P.W."/>
            <person name="Wyatt J.C."/>
            <person name="Young L."/>
            <person name="Younger R.M."/>
            <person name="Bentley D.R."/>
            <person name="Coulson A."/>
            <person name="Durbin R.M."/>
            <person name="Hubbard T."/>
            <person name="Sulston J.E."/>
            <person name="Dunham I."/>
            <person name="Rogers J."/>
            <person name="Beck S."/>
        </authorList>
    </citation>
    <scope>NUCLEOTIDE SEQUENCE [LARGE SCALE GENOMIC DNA]</scope>
</reference>
<comment type="interaction">
    <interactant intactId="EBI-11974061">
        <id>Q9UIG4</id>
    </interactant>
    <interactant intactId="EBI-712648">
        <id>O95994</id>
        <label>AGR2</label>
    </interactant>
    <organismsDiffer>false</organismsDiffer>
    <experiments>3</experiments>
</comment>
<comment type="interaction">
    <interactant intactId="EBI-11974061">
        <id>Q9UIG4</id>
    </interactant>
    <interactant intactId="EBI-11978055">
        <id>Q10567-3</id>
        <label>AP1B1</label>
    </interactant>
    <organismsDiffer>false</organismsDiffer>
    <experiments>3</experiments>
</comment>
<comment type="interaction">
    <interactant intactId="EBI-11974061">
        <id>Q9UIG4</id>
    </interactant>
    <interactant intactId="EBI-11529439">
        <id>P63010-2</id>
        <label>AP2B1</label>
    </interactant>
    <organismsDiffer>false</organismsDiffer>
    <experiments>3</experiments>
</comment>
<comment type="interaction">
    <interactant intactId="EBI-11974061">
        <id>Q9UIG4</id>
    </interactant>
    <interactant intactId="EBI-11524452">
        <id>Q8N9N5-2</id>
        <label>BANP</label>
    </interactant>
    <organismsDiffer>false</organismsDiffer>
    <experiments>3</experiments>
</comment>
<comment type="interaction">
    <interactant intactId="EBI-11974061">
        <id>Q9UIG4</id>
    </interactant>
    <interactant intactId="EBI-739624">
        <id>Q8NHQ1</id>
        <label>CEP70</label>
    </interactant>
    <organismsDiffer>false</organismsDiffer>
    <experiments>3</experiments>
</comment>
<comment type="interaction">
    <interactant intactId="EBI-11974061">
        <id>Q9UIG4</id>
    </interactant>
    <interactant intactId="EBI-2682520">
        <id>A1L162</id>
        <label>ERICH2</label>
    </interactant>
    <organismsDiffer>false</organismsDiffer>
    <experiments>3</experiments>
</comment>
<comment type="interaction">
    <interactant intactId="EBI-11974061">
        <id>Q9UIG4</id>
    </interactant>
    <interactant intactId="EBI-23668738">
        <id>O95843</id>
        <label>GUCA1C</label>
    </interactant>
    <organismsDiffer>false</organismsDiffer>
    <experiments>3</experiments>
</comment>
<comment type="interaction">
    <interactant intactId="EBI-11974061">
        <id>Q9UIG4</id>
    </interactant>
    <interactant intactId="EBI-740641">
        <id>Q9NP66</id>
        <label>HMG20A</label>
    </interactant>
    <organismsDiffer>false</organismsDiffer>
    <experiments>3</experiments>
</comment>
<comment type="interaction">
    <interactant intactId="EBI-11974061">
        <id>Q9UIG4</id>
    </interactant>
    <interactant intactId="EBI-748420">
        <id>Q9NSC5</id>
        <label>HOMER3</label>
    </interactant>
    <organismsDiffer>false</organismsDiffer>
    <experiments>3</experiments>
</comment>
<comment type="interaction">
    <interactant intactId="EBI-11974061">
        <id>Q9UIG4</id>
    </interactant>
    <interactant intactId="EBI-12039345">
        <id>Q9UBR4-2</id>
        <label>LHX3</label>
    </interactant>
    <organismsDiffer>false</organismsDiffer>
    <experiments>7</experiments>
</comment>
<comment type="interaction">
    <interactant intactId="EBI-11974061">
        <id>Q9UIG4</id>
    </interactant>
    <interactant intactId="EBI-394644">
        <id>Q9H944</id>
        <label>MED20</label>
    </interactant>
    <organismsDiffer>false</organismsDiffer>
    <experiments>3</experiments>
</comment>
<comment type="interaction">
    <interactant intactId="EBI-11974061">
        <id>Q9UIG4</id>
    </interactant>
    <interactant intactId="EBI-18582591">
        <id>Q99687-3</id>
        <label>MEIS3</label>
    </interactant>
    <organismsDiffer>false</organismsDiffer>
    <experiments>3</experiments>
</comment>
<comment type="interaction">
    <interactant intactId="EBI-11974061">
        <id>Q9UIG4</id>
    </interactant>
    <interactant intactId="EBI-725770">
        <id>P10916</id>
        <label>MYL2</label>
    </interactant>
    <organismsDiffer>false</organismsDiffer>
    <experiments>3</experiments>
</comment>
<comment type="interaction">
    <interactant intactId="EBI-11974061">
        <id>Q9UIG4</id>
    </interactant>
    <interactant intactId="EBI-10222416">
        <id>Q01449</id>
        <label>MYL7</label>
    </interactant>
    <organismsDiffer>false</organismsDiffer>
    <experiments>3</experiments>
</comment>
<comment type="interaction">
    <interactant intactId="EBI-11974061">
        <id>Q9UIG4</id>
    </interactant>
    <interactant intactId="EBI-10963850">
        <id>Q9NZQ3-3</id>
        <label>NCKIPSD</label>
    </interactant>
    <organismsDiffer>false</organismsDiffer>
    <experiments>3</experiments>
</comment>
<comment type="interaction">
    <interactant intactId="EBI-11974061">
        <id>Q9UIG4</id>
    </interactant>
    <interactant intactId="EBI-747278">
        <id>P26367</id>
        <label>PAX6</label>
    </interactant>
    <organismsDiffer>false</organismsDiffer>
    <experiments>3</experiments>
</comment>
<comment type="interaction">
    <interactant intactId="EBI-11974061">
        <id>Q9UIG4</id>
    </interactant>
    <interactant intactId="EBI-594747">
        <id>P40855</id>
        <label>PEX19</label>
    </interactant>
    <organismsDiffer>false</organismsDiffer>
    <experiments>5</experiments>
</comment>
<comment type="interaction">
    <interactant intactId="EBI-11974061">
        <id>Q9UIG4</id>
    </interactant>
    <interactant intactId="EBI-10829018">
        <id>Q04864-2</id>
        <label>REL</label>
    </interactant>
    <organismsDiffer>false</organismsDiffer>
    <experiments>3</experiments>
</comment>
<comment type="interaction">
    <interactant intactId="EBI-11974061">
        <id>Q9UIG4</id>
    </interactant>
    <interactant intactId="EBI-1104547">
        <id>Q9Y224</id>
        <label>RTRAF</label>
    </interactant>
    <organismsDiffer>false</organismsDiffer>
    <experiments>3</experiments>
</comment>
<comment type="interaction">
    <interactant intactId="EBI-11974061">
        <id>Q9UIG4</id>
    </interactant>
    <interactant intactId="EBI-748601">
        <id>Q9UHV2</id>
        <label>SERTAD1</label>
    </interactant>
    <organismsDiffer>false</organismsDiffer>
    <experiments>3</experiments>
</comment>
<comment type="interaction">
    <interactant intactId="EBI-11974061">
        <id>Q9UIG4</id>
    </interactant>
    <interactant intactId="EBI-347996">
        <id>O43765</id>
        <label>SGTA</label>
    </interactant>
    <organismsDiffer>false</organismsDiffer>
    <experiments>5</experiments>
</comment>
<comment type="interaction">
    <interactant intactId="EBI-11974061">
        <id>Q9UIG4</id>
    </interactant>
    <interactant intactId="EBI-744081">
        <id>Q96EQ0</id>
        <label>SGTB</label>
    </interactant>
    <organismsDiffer>false</organismsDiffer>
    <experiments>3</experiments>
</comment>
<comment type="interaction">
    <interactant intactId="EBI-11974061">
        <id>Q9UIG4</id>
    </interactant>
    <interactant intactId="EBI-9090990">
        <id>Q5W5X9-3</id>
        <label>TTC23</label>
    </interactant>
    <organismsDiffer>false</organismsDiffer>
    <experiments>3</experiments>
</comment>
<comment type="interaction">
    <interactant intactId="EBI-11974061">
        <id>Q9UIG4</id>
    </interactant>
    <interactant intactId="EBI-741480">
        <id>Q9UMX0</id>
        <label>UBQLN1</label>
    </interactant>
    <organismsDiffer>false</organismsDiffer>
    <experiments>3</experiments>
</comment>
<comment type="interaction">
    <interactant intactId="EBI-11974061">
        <id>Q9UIG4</id>
    </interactant>
    <interactant intactId="EBI-947187">
        <id>Q9UHD9</id>
        <label>UBQLN2</label>
    </interactant>
    <organismsDiffer>false</organismsDiffer>
    <experiments>3</experiments>
</comment>
<comment type="interaction">
    <interactant intactId="EBI-11974061">
        <id>Q9UIG4</id>
    </interactant>
    <interactant intactId="EBI-748201">
        <id>P50552</id>
        <label>VASP</label>
    </interactant>
    <organismsDiffer>false</organismsDiffer>
    <experiments>4</experiments>
</comment>
<comment type="subcellular location">
    <subcellularLocation>
        <location evidence="7">Secreted</location>
    </subcellularLocation>
</comment>
<comment type="tissue specificity">
    <text evidence="4">Expressed in skin. Also expressed in heart and skeletal muscle.</text>
</comment>
<feature type="signal peptide" evidence="1">
    <location>
        <begin position="1"/>
        <end position="22"/>
    </location>
</feature>
<feature type="chain" id="PRO_0000022159" description="Psoriasis susceptibility 1 candidate gene 2 protein">
    <location>
        <begin position="23"/>
        <end position="136"/>
    </location>
</feature>
<feature type="region of interest" description="Disordered" evidence="2">
    <location>
        <begin position="20"/>
        <end position="136"/>
    </location>
</feature>
<feature type="compositionally biased region" description="Pro residues" evidence="2">
    <location>
        <begin position="44"/>
        <end position="69"/>
    </location>
</feature>
<feature type="compositionally biased region" description="Pro residues" evidence="2">
    <location>
        <begin position="84"/>
        <end position="116"/>
    </location>
</feature>
<feature type="compositionally biased region" description="Basic and acidic residues" evidence="2">
    <location>
        <begin position="118"/>
        <end position="136"/>
    </location>
</feature>
<feature type="sequence variant" id="VAR_017395" description="In dbSNP:rs2233950." evidence="4">
    <original>G</original>
    <variation>D</variation>
    <location>
        <position position="25"/>
    </location>
</feature>
<feature type="sequence variant" id="VAR_063104" description="In dbSNP:rs2233952." evidence="3 4 5 6">
    <original>L</original>
    <variation>P</variation>
    <location>
        <position position="83"/>
    </location>
</feature>
<feature type="sequence variant" id="VAR_017396" evidence="4">
    <original>P</original>
    <variation>L</variation>
    <location>
        <position position="84"/>
    </location>
</feature>